<evidence type="ECO:0000255" key="1">
    <source>
        <dbReference type="HAMAP-Rule" id="MF_02113"/>
    </source>
</evidence>
<protein>
    <recommendedName>
        <fullName evidence="1">Proteasome subunit beta 2</fullName>
        <ecNumber evidence="1">3.4.25.1</ecNumber>
    </recommendedName>
    <alternativeName>
        <fullName evidence="1">20S proteasome beta subunit 2</fullName>
    </alternativeName>
    <alternativeName>
        <fullName evidence="1">Proteasome core protein PsmB 2</fullName>
    </alternativeName>
</protein>
<name>PSB2_SULAC</name>
<dbReference type="EC" id="3.4.25.1" evidence="1"/>
<dbReference type="EMBL" id="CP000077">
    <property type="protein sequence ID" value="AAY80272.1"/>
    <property type="molecule type" value="Genomic_DNA"/>
</dbReference>
<dbReference type="RefSeq" id="WP_011277774.1">
    <property type="nucleotide sequence ID" value="NC_007181.1"/>
</dbReference>
<dbReference type="SMR" id="Q4JAA8"/>
<dbReference type="STRING" id="330779.Saci_0909"/>
<dbReference type="MEROPS" id="T01.002"/>
<dbReference type="GeneID" id="14551420"/>
<dbReference type="KEGG" id="sai:Saci_0909"/>
<dbReference type="PATRIC" id="fig|330779.12.peg.869"/>
<dbReference type="eggNOG" id="arCOG00970">
    <property type="taxonomic scope" value="Archaea"/>
</dbReference>
<dbReference type="HOGENOM" id="CLU_035750_7_2_2"/>
<dbReference type="Proteomes" id="UP000001018">
    <property type="component" value="Chromosome"/>
</dbReference>
<dbReference type="GO" id="GO:0005737">
    <property type="term" value="C:cytoplasm"/>
    <property type="evidence" value="ECO:0007669"/>
    <property type="project" value="UniProtKB-SubCell"/>
</dbReference>
<dbReference type="GO" id="GO:0019774">
    <property type="term" value="C:proteasome core complex, beta-subunit complex"/>
    <property type="evidence" value="ECO:0007669"/>
    <property type="project" value="UniProtKB-UniRule"/>
</dbReference>
<dbReference type="GO" id="GO:0004298">
    <property type="term" value="F:threonine-type endopeptidase activity"/>
    <property type="evidence" value="ECO:0007669"/>
    <property type="project" value="UniProtKB-UniRule"/>
</dbReference>
<dbReference type="GO" id="GO:0010498">
    <property type="term" value="P:proteasomal protein catabolic process"/>
    <property type="evidence" value="ECO:0007669"/>
    <property type="project" value="UniProtKB-UniRule"/>
</dbReference>
<dbReference type="FunFam" id="3.60.20.10:FF:000049">
    <property type="entry name" value="Proteasome subunit beta"/>
    <property type="match status" value="1"/>
</dbReference>
<dbReference type="Gene3D" id="3.60.20.10">
    <property type="entry name" value="Glutamine Phosphoribosylpyrophosphate, subunit 1, domain 1"/>
    <property type="match status" value="1"/>
</dbReference>
<dbReference type="HAMAP" id="MF_02113_A">
    <property type="entry name" value="Proteasome_B_A"/>
    <property type="match status" value="1"/>
</dbReference>
<dbReference type="InterPro" id="IPR029055">
    <property type="entry name" value="Ntn_hydrolases_N"/>
</dbReference>
<dbReference type="InterPro" id="IPR019983">
    <property type="entry name" value="Pept_T1A_Psome_bsu_arc"/>
</dbReference>
<dbReference type="InterPro" id="IPR000243">
    <property type="entry name" value="Pept_T1A_subB"/>
</dbReference>
<dbReference type="InterPro" id="IPR016050">
    <property type="entry name" value="Proteasome_bsu_CS"/>
</dbReference>
<dbReference type="InterPro" id="IPR001353">
    <property type="entry name" value="Proteasome_sua/b"/>
</dbReference>
<dbReference type="InterPro" id="IPR023333">
    <property type="entry name" value="Proteasome_suB-type"/>
</dbReference>
<dbReference type="NCBIfam" id="TIGR03634">
    <property type="entry name" value="arc_protsome_B"/>
    <property type="match status" value="1"/>
</dbReference>
<dbReference type="PANTHER" id="PTHR32194:SF0">
    <property type="entry name" value="ATP-DEPENDENT PROTEASE SUBUNIT HSLV"/>
    <property type="match status" value="1"/>
</dbReference>
<dbReference type="PANTHER" id="PTHR32194">
    <property type="entry name" value="METALLOPROTEASE TLDD"/>
    <property type="match status" value="1"/>
</dbReference>
<dbReference type="Pfam" id="PF00227">
    <property type="entry name" value="Proteasome"/>
    <property type="match status" value="1"/>
</dbReference>
<dbReference type="PRINTS" id="PR00141">
    <property type="entry name" value="PROTEASOME"/>
</dbReference>
<dbReference type="SUPFAM" id="SSF56235">
    <property type="entry name" value="N-terminal nucleophile aminohydrolases (Ntn hydrolases)"/>
    <property type="match status" value="1"/>
</dbReference>
<dbReference type="PROSITE" id="PS00854">
    <property type="entry name" value="PROTEASOME_BETA_1"/>
    <property type="match status" value="1"/>
</dbReference>
<dbReference type="PROSITE" id="PS51476">
    <property type="entry name" value="PROTEASOME_BETA_2"/>
    <property type="match status" value="1"/>
</dbReference>
<comment type="function">
    <text evidence="1">Component of the proteasome core, a large protease complex with broad specificity involved in protein degradation.</text>
</comment>
<comment type="catalytic activity">
    <reaction evidence="1">
        <text>Cleavage of peptide bonds with very broad specificity.</text>
        <dbReference type="EC" id="3.4.25.1"/>
    </reaction>
</comment>
<comment type="activity regulation">
    <text evidence="1">The formation of the proteasomal ATPase PAN-20S proteasome complex, via the docking of the C-termini of PAN into the intersubunit pockets in the alpha-rings, triggers opening of the gate for substrate entry. Interconversion between the open-gate and close-gate conformations leads to a dynamic regulation of the 20S proteasome proteolysis activity.</text>
</comment>
<comment type="subunit">
    <text evidence="1">The 20S proteasome core is composed of 14 alpha and 14 beta subunits that assemble into four stacked heptameric rings, resulting in a barrel-shaped structure. The two inner rings, each composed of seven catalytic beta subunits, are sandwiched by two outer rings, each composed of seven alpha subunits. The catalytic chamber with the active sites is on the inside of the barrel. Has a gated structure, the ends of the cylinder being occluded by the N-termini of the alpha-subunits. Is capped at one or both ends by the proteasome regulatory ATPase, PAN.</text>
</comment>
<comment type="subcellular location">
    <subcellularLocation>
        <location evidence="1">Cytoplasm</location>
    </subcellularLocation>
</comment>
<comment type="similarity">
    <text evidence="1">Belongs to the peptidase T1B family.</text>
</comment>
<keyword id="KW-0068">Autocatalytic cleavage</keyword>
<keyword id="KW-0963">Cytoplasm</keyword>
<keyword id="KW-0378">Hydrolase</keyword>
<keyword id="KW-0645">Protease</keyword>
<keyword id="KW-0647">Proteasome</keyword>
<keyword id="KW-1185">Reference proteome</keyword>
<keyword id="KW-0888">Threonine protease</keyword>
<keyword id="KW-0865">Zymogen</keyword>
<proteinExistence type="inferred from homology"/>
<sequence>MNLQNKILKGTTTVGIKVKDGVVLAADRRASAGYYVAHKYVRKVLYVTDNIGITTAGSVADLQFIYEALKYIYHRNSITGEGPITVKGIATWLANVLSSSKYFPYLVQILIGGVDDQPRLYNLDYLGDITEEEYTATGSGSPEALGVLEDNYKPEMSLDEAAELAKRAIFSSIKRDSFTGTGVIVTKITKNGHEEKEYYITKR</sequence>
<feature type="propeptide" id="PRO_0000397422" description="Removed in mature form; by autocatalysis" evidence="1">
    <location>
        <begin position="1"/>
        <end position="10"/>
    </location>
</feature>
<feature type="chain" id="PRO_0000397423" description="Proteasome subunit beta 2">
    <location>
        <begin position="11"/>
        <end position="203"/>
    </location>
</feature>
<feature type="active site" description="Nucleophile" evidence="1">
    <location>
        <position position="11"/>
    </location>
</feature>
<organism>
    <name type="scientific">Sulfolobus acidocaldarius (strain ATCC 33909 / DSM 639 / JCM 8929 / NBRC 15157 / NCIMB 11770)</name>
    <dbReference type="NCBI Taxonomy" id="330779"/>
    <lineage>
        <taxon>Archaea</taxon>
        <taxon>Thermoproteota</taxon>
        <taxon>Thermoprotei</taxon>
        <taxon>Sulfolobales</taxon>
        <taxon>Sulfolobaceae</taxon>
        <taxon>Sulfolobus</taxon>
    </lineage>
</organism>
<accession>Q4JAA8</accession>
<reference key="1">
    <citation type="journal article" date="2005" name="J. Bacteriol.">
        <title>The genome of Sulfolobus acidocaldarius, a model organism of the Crenarchaeota.</title>
        <authorList>
            <person name="Chen L."/>
            <person name="Bruegger K."/>
            <person name="Skovgaard M."/>
            <person name="Redder P."/>
            <person name="She Q."/>
            <person name="Torarinsson E."/>
            <person name="Greve B."/>
            <person name="Awayez M."/>
            <person name="Zibat A."/>
            <person name="Klenk H.-P."/>
            <person name="Garrett R.A."/>
        </authorList>
    </citation>
    <scope>NUCLEOTIDE SEQUENCE [LARGE SCALE GENOMIC DNA]</scope>
    <source>
        <strain>ATCC 33909 / DSM 639 / JCM 8929 / NBRC 15157 / NCIMB 11770</strain>
    </source>
</reference>
<gene>
    <name evidence="1" type="primary">psmB2</name>
    <name type="ordered locus">Saci_0909</name>
</gene>